<protein>
    <recommendedName>
        <fullName>Helicase VP6-A</fullName>
        <ecNumber evidence="1">3.6.4.13</ecNumber>
    </recommendedName>
    <alternativeName>
        <fullName>Minor inner core protein VP6</fullName>
    </alternativeName>
</protein>
<accession>P32933</accession>
<evidence type="ECO:0000250" key="1">
    <source>
        <dbReference type="UniProtKB" id="Q98829"/>
    </source>
</evidence>
<evidence type="ECO:0000256" key="2">
    <source>
        <dbReference type="SAM" id="MobiDB-lite"/>
    </source>
</evidence>
<evidence type="ECO:0000305" key="3"/>
<name>VP6_BTV11</name>
<organism>
    <name type="scientific">Bluetongue virus 11 (isolate USA)</name>
    <name type="common">BTV 11</name>
    <dbReference type="NCBI Taxonomy" id="33716"/>
    <lineage>
        <taxon>Viruses</taxon>
        <taxon>Riboviria</taxon>
        <taxon>Orthornavirae</taxon>
        <taxon>Duplornaviricota</taxon>
        <taxon>Resentoviricetes</taxon>
        <taxon>Reovirales</taxon>
        <taxon>Sedoreoviridae</taxon>
        <taxon>Orbivirus</taxon>
        <taxon>Bluetongue virus</taxon>
    </lineage>
</organism>
<dbReference type="EC" id="3.6.4.13" evidence="1"/>
<dbReference type="EMBL" id="L08670">
    <property type="protein sequence ID" value="AAA42819.1"/>
    <property type="molecule type" value="Genomic_RNA"/>
</dbReference>
<dbReference type="PIR" id="A48561">
    <property type="entry name" value="A48561"/>
</dbReference>
<dbReference type="SMR" id="P32933"/>
<dbReference type="GO" id="GO:0039625">
    <property type="term" value="C:viral inner capsid"/>
    <property type="evidence" value="ECO:0007669"/>
    <property type="project" value="UniProtKB-KW"/>
</dbReference>
<dbReference type="GO" id="GO:0005524">
    <property type="term" value="F:ATP binding"/>
    <property type="evidence" value="ECO:0007669"/>
    <property type="project" value="UniProtKB-KW"/>
</dbReference>
<dbReference type="GO" id="GO:0016787">
    <property type="term" value="F:hydrolase activity"/>
    <property type="evidence" value="ECO:0007669"/>
    <property type="project" value="UniProtKB-KW"/>
</dbReference>
<dbReference type="GO" id="GO:0005198">
    <property type="term" value="F:structural molecule activity"/>
    <property type="evidence" value="ECO:0007669"/>
    <property type="project" value="InterPro"/>
</dbReference>
<dbReference type="InterPro" id="IPR001399">
    <property type="entry name" value="Orbi_VP6"/>
</dbReference>
<dbReference type="Pfam" id="PF01516">
    <property type="entry name" value="Orbi_VP6"/>
    <property type="match status" value="1"/>
</dbReference>
<dbReference type="PRINTS" id="PR00902">
    <property type="entry name" value="VP6CAPSID"/>
</dbReference>
<keyword id="KW-0067">ATP-binding</keyword>
<keyword id="KW-0167">Capsid protein</keyword>
<keyword id="KW-0378">Hydrolase</keyword>
<keyword id="KW-1153">Inner capsid protein</keyword>
<keyword id="KW-0547">Nucleotide-binding</keyword>
<keyword id="KW-0946">Virion</keyword>
<sequence length="325" mass="35371">MLLAPGDVIKRSSEELKQRQIQINLVDWTESEGGKEDKTEPKEESKAEGSKDGEGTQSESGQKEEGGKETKDADVDRRIHTAVGSGSSTKGPGERANENADRGDGKVGGGGGDADAGVGATGTNGRRWVVLTEEIARAIESKYGTKIDVYRDEVPAQIIEVERSLQKELGISREGVAEQTERLRDLRRKEKNGTHAKAVERGGRKQRKESHGDAQREGVEEEKTSEEPARIGITIEGVMSQKKLLSMIGGVERKMAPIGARESAVMLVSNSIKDVMRATAYFTAPTGDPHWKEVAREASKKKNILAYTSTGGDAKTEFLRLFDHL</sequence>
<comment type="function">
    <text evidence="1">ATP dependent RNA helicase essential for RNA packaging and viral transcription. Possesses ss- and dsRNA-binding capacity.</text>
</comment>
<comment type="catalytic activity">
    <reaction evidence="1">
        <text>ATP + H2O = ADP + phosphate + H(+)</text>
        <dbReference type="Rhea" id="RHEA:13065"/>
        <dbReference type="ChEBI" id="CHEBI:15377"/>
        <dbReference type="ChEBI" id="CHEBI:15378"/>
        <dbReference type="ChEBI" id="CHEBI:30616"/>
        <dbReference type="ChEBI" id="CHEBI:43474"/>
        <dbReference type="ChEBI" id="CHEBI:456216"/>
        <dbReference type="EC" id="3.6.4.13"/>
    </reaction>
</comment>
<comment type="subunit">
    <text evidence="1">Homohexamer.</text>
</comment>
<comment type="subcellular location">
    <subcellularLocation>
        <location>Virion</location>
    </subcellularLocation>
    <text>Inner capsid.</text>
</comment>
<comment type="similarity">
    <text evidence="3">Belongs to the orbivirus VP6 family.</text>
</comment>
<reference key="1">
    <citation type="journal article" date="1992" name="Virus Res.">
        <title>Comparative sequence analyses of the cognate structural protein VP6 genes of five US bluetongue viruses.</title>
        <authorList>
            <person name="Hwang G.-Y."/>
            <person name="Chiou J.-F."/>
            <person name="Yang Y.-Y."/>
            <person name="Li J.K.-K."/>
        </authorList>
    </citation>
    <scope>NUCLEOTIDE SEQUENCE [GENOMIC RNA]</scope>
</reference>
<organismHost>
    <name type="scientific">Antilocapra americana</name>
    <name type="common">Pronghorn</name>
    <dbReference type="NCBI Taxonomy" id="9891"/>
</organismHost>
<organismHost>
    <name type="scientific">Bos taurus</name>
    <name type="common">Bovine</name>
    <dbReference type="NCBI Taxonomy" id="9913"/>
</organismHost>
<organismHost>
    <name type="scientific">Capra hircus</name>
    <name type="common">Goat</name>
    <dbReference type="NCBI Taxonomy" id="9925"/>
</organismHost>
<organismHost>
    <name type="scientific">Culicoides variipennis</name>
    <name type="common">Biting midge</name>
    <dbReference type="NCBI Taxonomy" id="46212"/>
</organismHost>
<organismHost>
    <name type="scientific">Ovis aries</name>
    <name type="common">Sheep</name>
    <dbReference type="NCBI Taxonomy" id="9940"/>
</organismHost>
<proteinExistence type="inferred from homology"/>
<feature type="chain" id="PRO_0000222724" description="Helicase VP6-A">
    <location>
        <begin position="1"/>
        <end position="325"/>
    </location>
</feature>
<feature type="region of interest" description="Disordered" evidence="2">
    <location>
        <begin position="1"/>
        <end position="126"/>
    </location>
</feature>
<feature type="region of interest" description="Disordered" evidence="2">
    <location>
        <begin position="175"/>
        <end position="231"/>
    </location>
</feature>
<feature type="compositionally biased region" description="Basic and acidic residues" evidence="2">
    <location>
        <begin position="8"/>
        <end position="18"/>
    </location>
</feature>
<feature type="compositionally biased region" description="Basic and acidic residues" evidence="2">
    <location>
        <begin position="32"/>
        <end position="54"/>
    </location>
</feature>
<feature type="compositionally biased region" description="Basic and acidic residues" evidence="2">
    <location>
        <begin position="61"/>
        <end position="79"/>
    </location>
</feature>
<feature type="compositionally biased region" description="Basic and acidic residues" evidence="2">
    <location>
        <begin position="92"/>
        <end position="105"/>
    </location>
</feature>
<feature type="compositionally biased region" description="Gly residues" evidence="2">
    <location>
        <begin position="106"/>
        <end position="122"/>
    </location>
</feature>
<feature type="compositionally biased region" description="Basic and acidic residues" evidence="2">
    <location>
        <begin position="175"/>
        <end position="229"/>
    </location>
</feature>
<feature type="binding site" evidence="1">
    <location>
        <position position="106"/>
    </location>
    <ligand>
        <name>ATP</name>
        <dbReference type="ChEBI" id="CHEBI:30616"/>
    </ligand>
</feature>
<gene>
    <name type="primary">Segment-9</name>
</gene>